<accession>A5UBP1</accession>
<proteinExistence type="inferred from homology"/>
<keyword id="KW-0021">Allosteric enzyme</keyword>
<keyword id="KW-0328">Glycosyltransferase</keyword>
<keyword id="KW-0342">GTP-binding</keyword>
<keyword id="KW-0460">Magnesium</keyword>
<keyword id="KW-0547">Nucleotide-binding</keyword>
<keyword id="KW-0808">Transferase</keyword>
<comment type="function">
    <text evidence="1">Catalyzes the conversion of uracil and 5-phospho-alpha-D-ribose 1-diphosphate (PRPP) to UMP and diphosphate.</text>
</comment>
<comment type="catalytic activity">
    <reaction evidence="1">
        <text>UMP + diphosphate = 5-phospho-alpha-D-ribose 1-diphosphate + uracil</text>
        <dbReference type="Rhea" id="RHEA:13017"/>
        <dbReference type="ChEBI" id="CHEBI:17568"/>
        <dbReference type="ChEBI" id="CHEBI:33019"/>
        <dbReference type="ChEBI" id="CHEBI:57865"/>
        <dbReference type="ChEBI" id="CHEBI:58017"/>
        <dbReference type="EC" id="2.4.2.9"/>
    </reaction>
</comment>
<comment type="cofactor">
    <cofactor evidence="1">
        <name>Mg(2+)</name>
        <dbReference type="ChEBI" id="CHEBI:18420"/>
    </cofactor>
    <text evidence="1">Binds 1 Mg(2+) ion per subunit. The magnesium is bound as Mg-PRPP.</text>
</comment>
<comment type="activity regulation">
    <text evidence="1">Allosterically activated by GTP.</text>
</comment>
<comment type="pathway">
    <text evidence="1">Pyrimidine metabolism; UMP biosynthesis via salvage pathway; UMP from uracil: step 1/1.</text>
</comment>
<comment type="similarity">
    <text evidence="1">Belongs to the UPRTase family.</text>
</comment>
<gene>
    <name evidence="1" type="primary">upp</name>
    <name type="ordered locus">CGSHiEE_03875</name>
</gene>
<dbReference type="EC" id="2.4.2.9" evidence="1"/>
<dbReference type="EMBL" id="CP000671">
    <property type="protein sequence ID" value="ABQ98192.1"/>
    <property type="molecule type" value="Genomic_DNA"/>
</dbReference>
<dbReference type="SMR" id="A5UBP1"/>
<dbReference type="KEGG" id="hip:CGSHiEE_03875"/>
<dbReference type="HOGENOM" id="CLU_067096_2_2_6"/>
<dbReference type="UniPathway" id="UPA00574">
    <property type="reaction ID" value="UER00636"/>
</dbReference>
<dbReference type="GO" id="GO:0005525">
    <property type="term" value="F:GTP binding"/>
    <property type="evidence" value="ECO:0007669"/>
    <property type="project" value="UniProtKB-KW"/>
</dbReference>
<dbReference type="GO" id="GO:0000287">
    <property type="term" value="F:magnesium ion binding"/>
    <property type="evidence" value="ECO:0007669"/>
    <property type="project" value="UniProtKB-UniRule"/>
</dbReference>
<dbReference type="GO" id="GO:0004845">
    <property type="term" value="F:uracil phosphoribosyltransferase activity"/>
    <property type="evidence" value="ECO:0007669"/>
    <property type="project" value="UniProtKB-UniRule"/>
</dbReference>
<dbReference type="GO" id="GO:0044206">
    <property type="term" value="P:UMP salvage"/>
    <property type="evidence" value="ECO:0007669"/>
    <property type="project" value="UniProtKB-UniRule"/>
</dbReference>
<dbReference type="GO" id="GO:0006223">
    <property type="term" value="P:uracil salvage"/>
    <property type="evidence" value="ECO:0007669"/>
    <property type="project" value="InterPro"/>
</dbReference>
<dbReference type="CDD" id="cd06223">
    <property type="entry name" value="PRTases_typeI"/>
    <property type="match status" value="1"/>
</dbReference>
<dbReference type="FunFam" id="3.40.50.2020:FF:000003">
    <property type="entry name" value="Uracil phosphoribosyltransferase"/>
    <property type="match status" value="1"/>
</dbReference>
<dbReference type="Gene3D" id="3.40.50.2020">
    <property type="match status" value="1"/>
</dbReference>
<dbReference type="HAMAP" id="MF_01218_B">
    <property type="entry name" value="Upp_B"/>
    <property type="match status" value="1"/>
</dbReference>
<dbReference type="InterPro" id="IPR000836">
    <property type="entry name" value="PRibTrfase_dom"/>
</dbReference>
<dbReference type="InterPro" id="IPR029057">
    <property type="entry name" value="PRTase-like"/>
</dbReference>
<dbReference type="InterPro" id="IPR034332">
    <property type="entry name" value="Upp_B"/>
</dbReference>
<dbReference type="InterPro" id="IPR050054">
    <property type="entry name" value="UPRTase/APRTase"/>
</dbReference>
<dbReference type="InterPro" id="IPR005765">
    <property type="entry name" value="Ura_phspho_trans"/>
</dbReference>
<dbReference type="NCBIfam" id="NF001097">
    <property type="entry name" value="PRK00129.1"/>
    <property type="match status" value="1"/>
</dbReference>
<dbReference type="NCBIfam" id="TIGR01091">
    <property type="entry name" value="upp"/>
    <property type="match status" value="1"/>
</dbReference>
<dbReference type="PANTHER" id="PTHR32315">
    <property type="entry name" value="ADENINE PHOSPHORIBOSYLTRANSFERASE"/>
    <property type="match status" value="1"/>
</dbReference>
<dbReference type="PANTHER" id="PTHR32315:SF4">
    <property type="entry name" value="URACIL PHOSPHORIBOSYLTRANSFERASE, CHLOROPLASTIC"/>
    <property type="match status" value="1"/>
</dbReference>
<dbReference type="Pfam" id="PF14681">
    <property type="entry name" value="UPRTase"/>
    <property type="match status" value="1"/>
</dbReference>
<dbReference type="SUPFAM" id="SSF53271">
    <property type="entry name" value="PRTase-like"/>
    <property type="match status" value="1"/>
</dbReference>
<reference key="1">
    <citation type="journal article" date="2007" name="Genome Biol.">
        <title>Characterization and modeling of the Haemophilus influenzae core and supragenomes based on the complete genomic sequences of Rd and 12 clinical nontypeable strains.</title>
        <authorList>
            <person name="Hogg J.S."/>
            <person name="Hu F.Z."/>
            <person name="Janto B."/>
            <person name="Boissy R."/>
            <person name="Hayes J."/>
            <person name="Keefe R."/>
            <person name="Post J.C."/>
            <person name="Ehrlich G.D."/>
        </authorList>
    </citation>
    <scope>NUCLEOTIDE SEQUENCE [LARGE SCALE GENOMIC DNA]</scope>
    <source>
        <strain>PittEE</strain>
    </source>
</reference>
<evidence type="ECO:0000255" key="1">
    <source>
        <dbReference type="HAMAP-Rule" id="MF_01218"/>
    </source>
</evidence>
<protein>
    <recommendedName>
        <fullName evidence="1">Uracil phosphoribosyltransferase</fullName>
        <ecNumber evidence="1">2.4.2.9</ecNumber>
    </recommendedName>
    <alternativeName>
        <fullName evidence="1">UMP pyrophosphorylase</fullName>
    </alternativeName>
    <alternativeName>
        <fullName evidence="1">UPRTase</fullName>
    </alternativeName>
</protein>
<feature type="chain" id="PRO_1000053722" description="Uracil phosphoribosyltransferase">
    <location>
        <begin position="1"/>
        <end position="208"/>
    </location>
</feature>
<feature type="binding site" evidence="1">
    <location>
        <position position="78"/>
    </location>
    <ligand>
        <name>5-phospho-alpha-D-ribose 1-diphosphate</name>
        <dbReference type="ChEBI" id="CHEBI:58017"/>
    </ligand>
</feature>
<feature type="binding site" evidence="1">
    <location>
        <position position="103"/>
    </location>
    <ligand>
        <name>5-phospho-alpha-D-ribose 1-diphosphate</name>
        <dbReference type="ChEBI" id="CHEBI:58017"/>
    </ligand>
</feature>
<feature type="binding site" evidence="1">
    <location>
        <begin position="130"/>
        <end position="138"/>
    </location>
    <ligand>
        <name>5-phospho-alpha-D-ribose 1-diphosphate</name>
        <dbReference type="ChEBI" id="CHEBI:58017"/>
    </ligand>
</feature>
<feature type="binding site" evidence="1">
    <location>
        <position position="193"/>
    </location>
    <ligand>
        <name>uracil</name>
        <dbReference type="ChEBI" id="CHEBI:17568"/>
    </ligand>
</feature>
<feature type="binding site" evidence="1">
    <location>
        <begin position="198"/>
        <end position="200"/>
    </location>
    <ligand>
        <name>uracil</name>
        <dbReference type="ChEBI" id="CHEBI:17568"/>
    </ligand>
</feature>
<feature type="binding site" evidence="1">
    <location>
        <position position="199"/>
    </location>
    <ligand>
        <name>5-phospho-alpha-D-ribose 1-diphosphate</name>
        <dbReference type="ChEBI" id="CHEBI:58017"/>
    </ligand>
</feature>
<name>UPP_HAEIE</name>
<organism>
    <name type="scientific">Haemophilus influenzae (strain PittEE)</name>
    <dbReference type="NCBI Taxonomy" id="374930"/>
    <lineage>
        <taxon>Bacteria</taxon>
        <taxon>Pseudomonadati</taxon>
        <taxon>Pseudomonadota</taxon>
        <taxon>Gammaproteobacteria</taxon>
        <taxon>Pasteurellales</taxon>
        <taxon>Pasteurellaceae</taxon>
        <taxon>Haemophilus</taxon>
    </lineage>
</organism>
<sequence length="208" mass="22664">MKLVEVKHPLVKHKLGVMREAEIDTKKFRELATEIGSLLTYEATSDLETEKVTINGWNGPVEIDRIKGKKVTVVPILRAGLGMMDGVLEHVPSARISVVGIYRNEETLEPVPYFQKLASDLEERLSIVVDPMLATGGSMIATLDLLKAKGCKHIKVLVLVAAPEGIKALEAAHPDIELYCASIDSHLNEQGYIIPGLGDAGDKIFGTK</sequence>